<comment type="function">
    <text evidence="1">Catalyzes the conversion of 4-hydroxy-tetrahydrodipicolinate (HTPA) to tetrahydrodipicolinate.</text>
</comment>
<comment type="catalytic activity">
    <reaction evidence="1">
        <text>(S)-2,3,4,5-tetrahydrodipicolinate + NAD(+) + H2O = (2S,4S)-4-hydroxy-2,3,4,5-tetrahydrodipicolinate + NADH + H(+)</text>
        <dbReference type="Rhea" id="RHEA:35323"/>
        <dbReference type="ChEBI" id="CHEBI:15377"/>
        <dbReference type="ChEBI" id="CHEBI:15378"/>
        <dbReference type="ChEBI" id="CHEBI:16845"/>
        <dbReference type="ChEBI" id="CHEBI:57540"/>
        <dbReference type="ChEBI" id="CHEBI:57945"/>
        <dbReference type="ChEBI" id="CHEBI:67139"/>
        <dbReference type="EC" id="1.17.1.8"/>
    </reaction>
</comment>
<comment type="catalytic activity">
    <reaction evidence="1">
        <text>(S)-2,3,4,5-tetrahydrodipicolinate + NADP(+) + H2O = (2S,4S)-4-hydroxy-2,3,4,5-tetrahydrodipicolinate + NADPH + H(+)</text>
        <dbReference type="Rhea" id="RHEA:35331"/>
        <dbReference type="ChEBI" id="CHEBI:15377"/>
        <dbReference type="ChEBI" id="CHEBI:15378"/>
        <dbReference type="ChEBI" id="CHEBI:16845"/>
        <dbReference type="ChEBI" id="CHEBI:57783"/>
        <dbReference type="ChEBI" id="CHEBI:58349"/>
        <dbReference type="ChEBI" id="CHEBI:67139"/>
        <dbReference type="EC" id="1.17.1.8"/>
    </reaction>
</comment>
<comment type="pathway">
    <text evidence="1">Amino-acid biosynthesis; L-lysine biosynthesis via DAP pathway; (S)-tetrahydrodipicolinate from L-aspartate: step 4/4.</text>
</comment>
<comment type="subcellular location">
    <subcellularLocation>
        <location evidence="1">Cytoplasm</location>
    </subcellularLocation>
</comment>
<comment type="similarity">
    <text evidence="1">Belongs to the DapB family.</text>
</comment>
<comment type="caution">
    <text evidence="2">Was originally thought to be a dihydrodipicolinate reductase (DHDPR), catalyzing the conversion of dihydrodipicolinate to tetrahydrodipicolinate. However, it was shown in E.coli that the substrate of the enzymatic reaction is not dihydrodipicolinate (DHDP) but in fact (2S,4S)-4-hydroxy-2,3,4,5-tetrahydrodipicolinic acid (HTPA), the product released by the DapA-catalyzed reaction.</text>
</comment>
<accession>B3CN84</accession>
<evidence type="ECO:0000255" key="1">
    <source>
        <dbReference type="HAMAP-Rule" id="MF_00102"/>
    </source>
</evidence>
<evidence type="ECO:0000305" key="2"/>
<organism>
    <name type="scientific">Wolbachia pipientis subsp. Culex pipiens (strain wPip)</name>
    <dbReference type="NCBI Taxonomy" id="570417"/>
    <lineage>
        <taxon>Bacteria</taxon>
        <taxon>Pseudomonadati</taxon>
        <taxon>Pseudomonadota</taxon>
        <taxon>Alphaproteobacteria</taxon>
        <taxon>Rickettsiales</taxon>
        <taxon>Anaplasmataceae</taxon>
        <taxon>Wolbachieae</taxon>
        <taxon>Wolbachia</taxon>
    </lineage>
</organism>
<feature type="chain" id="PRO_1000094018" description="4-hydroxy-tetrahydrodipicolinate reductase">
    <location>
        <begin position="1"/>
        <end position="262"/>
    </location>
</feature>
<feature type="active site" description="Proton donor/acceptor" evidence="1">
    <location>
        <position position="154"/>
    </location>
</feature>
<feature type="active site" description="Proton donor" evidence="1">
    <location>
        <position position="158"/>
    </location>
</feature>
<feature type="binding site" evidence="1">
    <location>
        <begin position="9"/>
        <end position="14"/>
    </location>
    <ligand>
        <name>NAD(+)</name>
        <dbReference type="ChEBI" id="CHEBI:57540"/>
    </ligand>
</feature>
<feature type="binding site" evidence="1">
    <location>
        <position position="36"/>
    </location>
    <ligand>
        <name>NADP(+)</name>
        <dbReference type="ChEBI" id="CHEBI:58349"/>
    </ligand>
</feature>
<feature type="binding site" evidence="1">
    <location>
        <begin position="100"/>
        <end position="102"/>
    </location>
    <ligand>
        <name>NAD(+)</name>
        <dbReference type="ChEBI" id="CHEBI:57540"/>
    </ligand>
</feature>
<feature type="binding site" evidence="1">
    <location>
        <begin position="121"/>
        <end position="124"/>
    </location>
    <ligand>
        <name>NAD(+)</name>
        <dbReference type="ChEBI" id="CHEBI:57540"/>
    </ligand>
</feature>
<feature type="binding site" evidence="1">
    <location>
        <position position="155"/>
    </location>
    <ligand>
        <name>(S)-2,3,4,5-tetrahydrodipicolinate</name>
        <dbReference type="ChEBI" id="CHEBI:16845"/>
    </ligand>
</feature>
<feature type="binding site" evidence="1">
    <location>
        <begin position="164"/>
        <end position="165"/>
    </location>
    <ligand>
        <name>(S)-2,3,4,5-tetrahydrodipicolinate</name>
        <dbReference type="ChEBI" id="CHEBI:16845"/>
    </ligand>
</feature>
<name>DAPB_WOLPP</name>
<gene>
    <name evidence="1" type="primary">dapB</name>
    <name type="ordered locus">WP0108</name>
</gene>
<dbReference type="EC" id="1.17.1.8" evidence="1"/>
<dbReference type="EMBL" id="AM999887">
    <property type="protein sequence ID" value="CAQ54216.1"/>
    <property type="molecule type" value="Genomic_DNA"/>
</dbReference>
<dbReference type="RefSeq" id="WP_007302740.1">
    <property type="nucleotide sequence ID" value="NC_010981.1"/>
</dbReference>
<dbReference type="SMR" id="B3CN84"/>
<dbReference type="KEGG" id="wpi:WP0108"/>
<dbReference type="eggNOG" id="COG0289">
    <property type="taxonomic scope" value="Bacteria"/>
</dbReference>
<dbReference type="HOGENOM" id="CLU_047479_2_2_5"/>
<dbReference type="UniPathway" id="UPA00034">
    <property type="reaction ID" value="UER00018"/>
</dbReference>
<dbReference type="Proteomes" id="UP000008814">
    <property type="component" value="Chromosome"/>
</dbReference>
<dbReference type="GO" id="GO:0005737">
    <property type="term" value="C:cytoplasm"/>
    <property type="evidence" value="ECO:0007669"/>
    <property type="project" value="UniProtKB-SubCell"/>
</dbReference>
<dbReference type="GO" id="GO:0008839">
    <property type="term" value="F:4-hydroxy-tetrahydrodipicolinate reductase"/>
    <property type="evidence" value="ECO:0007669"/>
    <property type="project" value="UniProtKB-EC"/>
</dbReference>
<dbReference type="GO" id="GO:0051287">
    <property type="term" value="F:NAD binding"/>
    <property type="evidence" value="ECO:0007669"/>
    <property type="project" value="UniProtKB-UniRule"/>
</dbReference>
<dbReference type="GO" id="GO:0050661">
    <property type="term" value="F:NADP binding"/>
    <property type="evidence" value="ECO:0007669"/>
    <property type="project" value="UniProtKB-UniRule"/>
</dbReference>
<dbReference type="GO" id="GO:0016726">
    <property type="term" value="F:oxidoreductase activity, acting on CH or CH2 groups, NAD or NADP as acceptor"/>
    <property type="evidence" value="ECO:0007669"/>
    <property type="project" value="UniProtKB-UniRule"/>
</dbReference>
<dbReference type="GO" id="GO:0019877">
    <property type="term" value="P:diaminopimelate biosynthetic process"/>
    <property type="evidence" value="ECO:0007669"/>
    <property type="project" value="UniProtKB-UniRule"/>
</dbReference>
<dbReference type="GO" id="GO:0009089">
    <property type="term" value="P:lysine biosynthetic process via diaminopimelate"/>
    <property type="evidence" value="ECO:0007669"/>
    <property type="project" value="UniProtKB-UniRule"/>
</dbReference>
<dbReference type="CDD" id="cd02274">
    <property type="entry name" value="DHDPR_N"/>
    <property type="match status" value="1"/>
</dbReference>
<dbReference type="Gene3D" id="3.30.360.10">
    <property type="entry name" value="Dihydrodipicolinate Reductase, domain 2"/>
    <property type="match status" value="1"/>
</dbReference>
<dbReference type="Gene3D" id="3.40.50.720">
    <property type="entry name" value="NAD(P)-binding Rossmann-like Domain"/>
    <property type="match status" value="1"/>
</dbReference>
<dbReference type="HAMAP" id="MF_00102">
    <property type="entry name" value="DapB"/>
    <property type="match status" value="1"/>
</dbReference>
<dbReference type="InterPro" id="IPR022663">
    <property type="entry name" value="DapB_C"/>
</dbReference>
<dbReference type="InterPro" id="IPR000846">
    <property type="entry name" value="DapB_N"/>
</dbReference>
<dbReference type="InterPro" id="IPR022664">
    <property type="entry name" value="DapB_N_CS"/>
</dbReference>
<dbReference type="InterPro" id="IPR023940">
    <property type="entry name" value="DHDPR_bac"/>
</dbReference>
<dbReference type="InterPro" id="IPR036291">
    <property type="entry name" value="NAD(P)-bd_dom_sf"/>
</dbReference>
<dbReference type="NCBIfam" id="TIGR00036">
    <property type="entry name" value="dapB"/>
    <property type="match status" value="1"/>
</dbReference>
<dbReference type="PANTHER" id="PTHR20836:SF0">
    <property type="entry name" value="4-HYDROXY-TETRAHYDRODIPICOLINATE REDUCTASE 1, CHLOROPLASTIC-RELATED"/>
    <property type="match status" value="1"/>
</dbReference>
<dbReference type="PANTHER" id="PTHR20836">
    <property type="entry name" value="DIHYDRODIPICOLINATE REDUCTASE"/>
    <property type="match status" value="1"/>
</dbReference>
<dbReference type="Pfam" id="PF05173">
    <property type="entry name" value="DapB_C"/>
    <property type="match status" value="1"/>
</dbReference>
<dbReference type="Pfam" id="PF01113">
    <property type="entry name" value="DapB_N"/>
    <property type="match status" value="1"/>
</dbReference>
<dbReference type="PIRSF" id="PIRSF000161">
    <property type="entry name" value="DHPR"/>
    <property type="match status" value="1"/>
</dbReference>
<dbReference type="SUPFAM" id="SSF55347">
    <property type="entry name" value="Glyceraldehyde-3-phosphate dehydrogenase-like, C-terminal domain"/>
    <property type="match status" value="1"/>
</dbReference>
<dbReference type="SUPFAM" id="SSF51735">
    <property type="entry name" value="NAD(P)-binding Rossmann-fold domains"/>
    <property type="match status" value="1"/>
</dbReference>
<dbReference type="PROSITE" id="PS01298">
    <property type="entry name" value="DAPB"/>
    <property type="match status" value="1"/>
</dbReference>
<keyword id="KW-0028">Amino-acid biosynthesis</keyword>
<keyword id="KW-0963">Cytoplasm</keyword>
<keyword id="KW-0220">Diaminopimelate biosynthesis</keyword>
<keyword id="KW-0457">Lysine biosynthesis</keyword>
<keyword id="KW-0520">NAD</keyword>
<keyword id="KW-0521">NADP</keyword>
<keyword id="KW-0560">Oxidoreductase</keyword>
<protein>
    <recommendedName>
        <fullName evidence="1">4-hydroxy-tetrahydrodipicolinate reductase</fullName>
        <shortName evidence="1">HTPA reductase</shortName>
        <ecNumber evidence="1">1.17.1.8</ecNumber>
    </recommendedName>
</protein>
<sequence length="262" mass="28317">MKIRVGVIGCLGRMGKKILNELITNTKVEIAGAVARLGSEYIGLDIGPIVGNNCNLGIKITSSISEVFESSDVVIDFTTKECMLECLKAAVKFKKPLVSGTTGIEGLNLKDYAAKVPILWSANMSIGVNVLLKLVKEAAKLLGNEYDVEIWEMHHNLKKDSPSGTAIEFGKAVANAAKVDFELNQYSHNNSNIRGKGGIGFAVSRGGGVIGDHSVMFVNYDERVELNHKAIDRTTFARGAVQAAIWLCENKTPGLYSMQDLV</sequence>
<reference key="1">
    <citation type="journal article" date="2008" name="Mol. Biol. Evol.">
        <title>Genome evolution of Wolbachia strain wPip from the Culex pipiens group.</title>
        <authorList>
            <person name="Klasson L."/>
            <person name="Walker T."/>
            <person name="Sebaihia M."/>
            <person name="Sanders M.J."/>
            <person name="Quail M.A."/>
            <person name="Lord A."/>
            <person name="Sanders S."/>
            <person name="Earl J."/>
            <person name="O'Neill S.L."/>
            <person name="Thomson N."/>
            <person name="Sinkins S.P."/>
            <person name="Parkhill J."/>
        </authorList>
    </citation>
    <scope>NUCLEOTIDE SEQUENCE [LARGE SCALE GENOMIC DNA]</scope>
    <source>
        <strain>wPip</strain>
    </source>
</reference>
<proteinExistence type="inferred from homology"/>